<name>TRAM1_RAT</name>
<protein>
    <recommendedName>
        <fullName evidence="1">Translocating chain-associated membrane protein 1</fullName>
        <shortName evidence="1">Protein TRAM1</shortName>
    </recommendedName>
</protein>
<proteinExistence type="evidence at protein level"/>
<feature type="chain" id="PRO_0000240445" description="Translocating chain-associated membrane protein 1">
    <location>
        <begin position="1"/>
        <end position="374"/>
    </location>
</feature>
<feature type="topological domain" description="Cytoplasmic" evidence="2">
    <location>
        <begin position="1"/>
        <end position="32"/>
    </location>
</feature>
<feature type="transmembrane region" description="Helical" evidence="3">
    <location>
        <begin position="33"/>
        <end position="53"/>
    </location>
</feature>
<feature type="topological domain" description="Lumenal" evidence="2">
    <location>
        <begin position="54"/>
        <end position="81"/>
    </location>
</feature>
<feature type="transmembrane region" description="Helical" evidence="3">
    <location>
        <begin position="82"/>
        <end position="102"/>
    </location>
</feature>
<feature type="topological domain" description="Cytoplasmic" evidence="2">
    <location>
        <begin position="103"/>
        <end position="121"/>
    </location>
</feature>
<feature type="transmembrane region" description="Helical" evidence="3">
    <location>
        <begin position="122"/>
        <end position="142"/>
    </location>
</feature>
<feature type="topological domain" description="Lumenal" evidence="2">
    <location>
        <begin position="143"/>
        <end position="159"/>
    </location>
</feature>
<feature type="transmembrane region" description="Helical" evidence="3">
    <location>
        <begin position="160"/>
        <end position="180"/>
    </location>
</feature>
<feature type="topological domain" description="Cytoplasmic" evidence="2">
    <location>
        <begin position="181"/>
        <end position="192"/>
    </location>
</feature>
<feature type="transmembrane region" description="Helical" evidence="3">
    <location>
        <begin position="193"/>
        <end position="213"/>
    </location>
</feature>
<feature type="topological domain" description="Lumenal" evidence="2">
    <location>
        <position position="214"/>
    </location>
</feature>
<feature type="transmembrane region" description="Helical" evidence="3">
    <location>
        <begin position="215"/>
        <end position="235"/>
    </location>
</feature>
<feature type="topological domain" description="Cytoplasmic" evidence="2">
    <location>
        <begin position="236"/>
        <end position="251"/>
    </location>
</feature>
<feature type="transmembrane region" description="Helical" evidence="3">
    <location>
        <begin position="252"/>
        <end position="272"/>
    </location>
</feature>
<feature type="topological domain" description="Lumenal" evidence="2">
    <location>
        <begin position="273"/>
        <end position="297"/>
    </location>
</feature>
<feature type="transmembrane region" description="Helical" evidence="3">
    <location>
        <begin position="298"/>
        <end position="318"/>
    </location>
</feature>
<feature type="topological domain" description="Cytoplasmic" evidence="2">
    <location>
        <begin position="319"/>
        <end position="374"/>
    </location>
</feature>
<feature type="domain" description="TLC" evidence="4">
    <location>
        <begin position="117"/>
        <end position="326"/>
    </location>
</feature>
<feature type="region of interest" description="Disordered" evidence="5">
    <location>
        <begin position="333"/>
        <end position="374"/>
    </location>
</feature>
<feature type="compositionally biased region" description="Basic residues" evidence="5">
    <location>
        <begin position="334"/>
        <end position="347"/>
    </location>
</feature>
<feature type="compositionally biased region" description="Polar residues" evidence="5">
    <location>
        <begin position="352"/>
        <end position="363"/>
    </location>
</feature>
<feature type="modified residue" description="Phosphoserine" evidence="8">
    <location>
        <position position="365"/>
    </location>
</feature>
<feature type="glycosylation site" description="N-linked (GlcNAc...) asparagine" evidence="3">
    <location>
        <position position="56"/>
    </location>
</feature>
<accession>Q5XI41</accession>
<sequence length="374" mass="43030">MAIRKKSNKNPPVLSHEFVLQNHADIVSCLAMLFLLGLMFEITAKGAIIFVALQYNVTRPATEEQAAESASLYYYGIKDLATVFFYMLVAIIVHAIIQEYVLDKINRRMHFSKTKHSKFNESGQLSAFYLFACVWGTFILVSENYISDPTILWRAYPHNLMTFQMKFFYISQLAYWLHAFPELYFQKTKKEDIPRQLVYIGLYLFHIAGAYLLNLNHLGLVLLVLHYFVEFLFHISRLFYFSDEKYQKGFSLWAVLFVLGRLLTLILSVLTVGFGLARAENQKLDFSTGNFNVLAVRIAVLASICITQAFMMWKFINFQLRRWREHSAFQAPPVKRKPAVTKGRSSRKGTENGVNGTVTSNGADSPRSRKEKSS</sequence>
<keyword id="KW-0256">Endoplasmic reticulum</keyword>
<keyword id="KW-0325">Glycoprotein</keyword>
<keyword id="KW-0472">Membrane</keyword>
<keyword id="KW-0597">Phosphoprotein</keyword>
<keyword id="KW-0653">Protein transport</keyword>
<keyword id="KW-1185">Reference proteome</keyword>
<keyword id="KW-0811">Translocation</keyword>
<keyword id="KW-0812">Transmembrane</keyword>
<keyword id="KW-1133">Transmembrane helix</keyword>
<keyword id="KW-0813">Transport</keyword>
<dbReference type="EMBL" id="BC083851">
    <property type="protein sequence ID" value="AAH83851.1"/>
    <property type="molecule type" value="mRNA"/>
</dbReference>
<dbReference type="RefSeq" id="NP_001007702.1">
    <property type="nucleotide sequence ID" value="NM_001007701.1"/>
</dbReference>
<dbReference type="SMR" id="Q5XI41"/>
<dbReference type="FunCoup" id="Q5XI41">
    <property type="interactions" value="1390"/>
</dbReference>
<dbReference type="STRING" id="10116.ENSRNOP00000045166"/>
<dbReference type="GlyCosmos" id="Q5XI41">
    <property type="glycosylation" value="1 site, No reported glycans"/>
</dbReference>
<dbReference type="GlyGen" id="Q5XI41">
    <property type="glycosylation" value="1 site"/>
</dbReference>
<dbReference type="iPTMnet" id="Q5XI41"/>
<dbReference type="PhosphoSitePlus" id="Q5XI41"/>
<dbReference type="PaxDb" id="10116-ENSRNOP00000045166"/>
<dbReference type="GeneID" id="312903"/>
<dbReference type="KEGG" id="rno:312903"/>
<dbReference type="UCSC" id="RGD:1359100">
    <property type="organism name" value="rat"/>
</dbReference>
<dbReference type="AGR" id="RGD:1359100"/>
<dbReference type="CTD" id="23471"/>
<dbReference type="RGD" id="1359100">
    <property type="gene designation" value="Tram1"/>
</dbReference>
<dbReference type="VEuPathDB" id="HostDB:ENSRNOG00000007892"/>
<dbReference type="eggNOG" id="KOG1608">
    <property type="taxonomic scope" value="Eukaryota"/>
</dbReference>
<dbReference type="HOGENOM" id="CLU_062830_0_0_1"/>
<dbReference type="InParanoid" id="Q5XI41"/>
<dbReference type="OrthoDB" id="35457at9989"/>
<dbReference type="PRO" id="PR:Q5XI41"/>
<dbReference type="Proteomes" id="UP000002494">
    <property type="component" value="Chromosome 5"/>
</dbReference>
<dbReference type="Bgee" id="ENSRNOG00000007892">
    <property type="expression patterns" value="Expressed in pancreas and 20 other cell types or tissues"/>
</dbReference>
<dbReference type="ExpressionAtlas" id="Q5XI41">
    <property type="expression patterns" value="baseline and differential"/>
</dbReference>
<dbReference type="GO" id="GO:0005783">
    <property type="term" value="C:endoplasmic reticulum"/>
    <property type="evidence" value="ECO:0000266"/>
    <property type="project" value="RGD"/>
</dbReference>
<dbReference type="GO" id="GO:0005789">
    <property type="term" value="C:endoplasmic reticulum membrane"/>
    <property type="evidence" value="ECO:0000250"/>
    <property type="project" value="UniProtKB"/>
</dbReference>
<dbReference type="GO" id="GO:0006613">
    <property type="term" value="P:cotranslational protein targeting to membrane"/>
    <property type="evidence" value="ECO:0000250"/>
    <property type="project" value="UniProtKB"/>
</dbReference>
<dbReference type="GO" id="GO:0045048">
    <property type="term" value="P:protein insertion into ER membrane"/>
    <property type="evidence" value="ECO:0000250"/>
    <property type="project" value="UniProtKB"/>
</dbReference>
<dbReference type="GO" id="GO:0006986">
    <property type="term" value="P:response to unfolded protein"/>
    <property type="evidence" value="ECO:0000250"/>
    <property type="project" value="UniProtKB"/>
</dbReference>
<dbReference type="GO" id="GO:0006616">
    <property type="term" value="P:SRP-dependent cotranslational protein targeting to membrane, translocation"/>
    <property type="evidence" value="ECO:0000266"/>
    <property type="project" value="RGD"/>
</dbReference>
<dbReference type="InterPro" id="IPR006634">
    <property type="entry name" value="TLC-dom"/>
</dbReference>
<dbReference type="InterPro" id="IPR016447">
    <property type="entry name" value="Translocation_assoc_membrane"/>
</dbReference>
<dbReference type="PANTHER" id="PTHR12371:SF3">
    <property type="entry name" value="TRANSLOCATING CHAIN-ASSOCIATED MEMBRANE PROTEIN 1"/>
    <property type="match status" value="1"/>
</dbReference>
<dbReference type="PANTHER" id="PTHR12371">
    <property type="entry name" value="TRANSLOCATION ASSOCIATED MEMBRANE PROTEIN"/>
    <property type="match status" value="1"/>
</dbReference>
<dbReference type="Pfam" id="PF03798">
    <property type="entry name" value="TRAM_LAG1_CLN8"/>
    <property type="match status" value="1"/>
</dbReference>
<dbReference type="PIRSF" id="PIRSF005449">
    <property type="entry name" value="Translocation_assoc_membrane"/>
    <property type="match status" value="1"/>
</dbReference>
<dbReference type="SMART" id="SM00724">
    <property type="entry name" value="TLC"/>
    <property type="match status" value="1"/>
</dbReference>
<dbReference type="PROSITE" id="PS50922">
    <property type="entry name" value="TLC"/>
    <property type="match status" value="1"/>
</dbReference>
<reference key="1">
    <citation type="journal article" date="2004" name="Genome Res.">
        <title>The status, quality, and expansion of the NIH full-length cDNA project: the Mammalian Gene Collection (MGC).</title>
        <authorList>
            <consortium name="The MGC Project Team"/>
        </authorList>
    </citation>
    <scope>NUCLEOTIDE SEQUENCE [LARGE SCALE MRNA]</scope>
    <source>
        <tissue>Lung</tissue>
    </source>
</reference>
<reference key="2">
    <citation type="journal article" date="2012" name="Nat. Commun.">
        <title>Quantitative maps of protein phosphorylation sites across 14 different rat organs and tissues.</title>
        <authorList>
            <person name="Lundby A."/>
            <person name="Secher A."/>
            <person name="Lage K."/>
            <person name="Nordsborg N.B."/>
            <person name="Dmytriyev A."/>
            <person name="Lundby C."/>
            <person name="Olsen J.V."/>
        </authorList>
    </citation>
    <scope>PHOSPHORYLATION [LARGE SCALE ANALYSIS] AT SER-365</scope>
    <scope>IDENTIFICATION BY MASS SPECTROMETRY [LARGE SCALE ANALYSIS]</scope>
</reference>
<gene>
    <name evidence="7" type="primary">Tram1</name>
    <name evidence="1" type="synonym">Tram</name>
</gene>
<evidence type="ECO:0000250" key="1">
    <source>
        <dbReference type="UniProtKB" id="Q15629"/>
    </source>
</evidence>
<evidence type="ECO:0000250" key="2">
    <source>
        <dbReference type="UniProtKB" id="Q91V04"/>
    </source>
</evidence>
<evidence type="ECO:0000255" key="3"/>
<evidence type="ECO:0000255" key="4">
    <source>
        <dbReference type="PROSITE-ProRule" id="PRU00205"/>
    </source>
</evidence>
<evidence type="ECO:0000256" key="5">
    <source>
        <dbReference type="SAM" id="MobiDB-lite"/>
    </source>
</evidence>
<evidence type="ECO:0000305" key="6"/>
<evidence type="ECO:0000312" key="7">
    <source>
        <dbReference type="RGD" id="1359100"/>
    </source>
</evidence>
<evidence type="ECO:0007744" key="8">
    <source>
    </source>
</evidence>
<organism>
    <name type="scientific">Rattus norvegicus</name>
    <name type="common">Rat</name>
    <dbReference type="NCBI Taxonomy" id="10116"/>
    <lineage>
        <taxon>Eukaryota</taxon>
        <taxon>Metazoa</taxon>
        <taxon>Chordata</taxon>
        <taxon>Craniata</taxon>
        <taxon>Vertebrata</taxon>
        <taxon>Euteleostomi</taxon>
        <taxon>Mammalia</taxon>
        <taxon>Eutheria</taxon>
        <taxon>Euarchontoglires</taxon>
        <taxon>Glires</taxon>
        <taxon>Rodentia</taxon>
        <taxon>Myomorpha</taxon>
        <taxon>Muroidea</taxon>
        <taxon>Muridae</taxon>
        <taxon>Murinae</taxon>
        <taxon>Rattus</taxon>
    </lineage>
</organism>
<comment type="function">
    <text evidence="1">Involved in the translocation of nascent protein chains into or through the endoplasmic reticulum (ER) membrane by facilitating the proper chain positioning at the SEC61 channel. Regulates the exposure of nascent secretory protein chain to the cytosol during translocation into the ER. May affect the phospholipid bilayer in the vicinity of the lateral gate of the SEC61 channel, thereby facilitating ER protein transport. Intimately associates with transmembrane (TM) domain of nascent membrane proteins during the entire integration process into the ER membrane. Associates with the second TM domain of G-protein-coupled receptor opsin/OPSD nascent chain in the ER membrane, which may facilitate its integration into the membrane. Under conditions of ER stress, participates in the disposal of misfolded ER membrane proteins during the unfolded protein response (UPR), an integrated stress response (ISR) pathway, by selectively retrotranslocating misfolded ER-membrane proteins from the ER into the cytosol where they are ubiquitinated and degraded by the proteasome.</text>
</comment>
<comment type="subunit">
    <text evidence="1">Interacts with SEC61B. May interact with Derlin-1/DERL1.</text>
</comment>
<comment type="subcellular location">
    <subcellularLocation>
        <location evidence="1">Endoplasmic reticulum membrane</location>
        <topology evidence="3">Multi-pass membrane protein</topology>
    </subcellularLocation>
</comment>
<comment type="PTM">
    <text evidence="1">N-glycosylated.</text>
</comment>
<comment type="similarity">
    <text evidence="6">Belongs to the TRAM family.</text>
</comment>